<organism>
    <name type="scientific">Saccharomyces cerevisiae (strain YJM789)</name>
    <name type="common">Baker's yeast</name>
    <dbReference type="NCBI Taxonomy" id="307796"/>
    <lineage>
        <taxon>Eukaryota</taxon>
        <taxon>Fungi</taxon>
        <taxon>Dikarya</taxon>
        <taxon>Ascomycota</taxon>
        <taxon>Saccharomycotina</taxon>
        <taxon>Saccharomycetes</taxon>
        <taxon>Saccharomycetales</taxon>
        <taxon>Saccharomycetaceae</taxon>
        <taxon>Saccharomyces</taxon>
    </lineage>
</organism>
<accession>A6ZTG5</accession>
<sequence length="633" mass="69784">MSSSKSPYELKDLKNSSTEIHATEQDNEIEYFETGSNDRPSSQPHLGYEQHNTSAVRRFFDSFKRADQGPQDEVEATQMNDLTSAISPSSRRAQELEKNESSDNIGANTGHKSDSLKKTIQPRHVLMIALGTGIGTGLLVGNGTALVHAGPAGLLIGYAIMGSILYCIIQACGEMALVYSNLTGGYNAYPSFLVDDGFGFAVAWVYCLQWLCVCPLELVTASMTIKYWTTSVNPDVFVIIFYVLVITINIFGARGYAEAEFFFNCCKILMMTGFFILGIIIDVGGAGNDGFIGGKYWHDPGAFNGKHAIDRFKGVVATLVTAAFAFGGSEFIAITTAEQSNPRKAIPGAAKQMIYRILFLFLATIILLGFLVPYNSDQLLGSTGGGTKASPYVIAVASHGVRVVPHFINAVILLSVLSMANSSFYSSARLFLTLSEQGYAPKVFSYIDRAGRPLIAMGVSALFAVIAFCAASPKEEQVFTWLLAISGLSQLFTWTAICLSHLRFRRAMKVQGRSLGELGFKSQTGVWGSAYACIMMILILIAQFWVAIAPIGEGKLDAQAFFENYLAMPILIALYVGYKVWHKDWKLFIRADKIDLDSHRQIFDEELIKQEDEEYRERLRNGPYWKRVVAFWC</sequence>
<reference key="1">
    <citation type="journal article" date="2007" name="Proc. Natl. Acad. Sci. U.S.A.">
        <title>Genome sequencing and comparative analysis of Saccharomyces cerevisiae strain YJM789.</title>
        <authorList>
            <person name="Wei W."/>
            <person name="McCusker J.H."/>
            <person name="Hyman R.W."/>
            <person name="Jones T."/>
            <person name="Ning Y."/>
            <person name="Cao Z."/>
            <person name="Gu Z."/>
            <person name="Bruno D."/>
            <person name="Miranda M."/>
            <person name="Nguyen M."/>
            <person name="Wilhelmy J."/>
            <person name="Komp C."/>
            <person name="Tamse R."/>
            <person name="Wang X."/>
            <person name="Jia P."/>
            <person name="Luedi P."/>
            <person name="Oefner P.J."/>
            <person name="David L."/>
            <person name="Dietrich F.S."/>
            <person name="Li Y."/>
            <person name="Davis R.W."/>
            <person name="Steinmetz L.M."/>
        </authorList>
    </citation>
    <scope>NUCLEOTIDE SEQUENCE [LARGE SCALE GENOMIC DNA]</scope>
    <source>
        <strain>YJM789</strain>
    </source>
</reference>
<name>AGP1_YEAS7</name>
<keyword id="KW-0029">Amino-acid transport</keyword>
<keyword id="KW-1003">Cell membrane</keyword>
<keyword id="KW-1017">Isopeptide bond</keyword>
<keyword id="KW-0449">Lipoprotein</keyword>
<keyword id="KW-0472">Membrane</keyword>
<keyword id="KW-0564">Palmitate</keyword>
<keyword id="KW-0597">Phosphoprotein</keyword>
<keyword id="KW-0812">Transmembrane</keyword>
<keyword id="KW-1133">Transmembrane helix</keyword>
<keyword id="KW-0813">Transport</keyword>
<keyword id="KW-0832">Ubl conjugation</keyword>
<gene>
    <name type="primary">AGP1</name>
    <name type="ORF">SCY_0558</name>
</gene>
<comment type="function">
    <text evidence="1">Broad substrate range permease which transports asparagine and glutamine with intermediate specificity. Also transports Ala, Cys, Gly, Ile, Leu, Met, Phe, Ser, Thr, Tyr and Val. Important for the utilization of amino acids as a nitrogen source (By similarity).</text>
</comment>
<comment type="subcellular location">
    <subcellularLocation>
        <location evidence="1">Cell membrane</location>
        <topology evidence="1">Multi-pass membrane protein</topology>
    </subcellularLocation>
</comment>
<comment type="induction">
    <text evidence="1">Induced by transcription factors DAL81 and STP1, which are activated by a signal initiated by the plasma membrane SPS (SSY1-PTR3-SSY5) amino acid sensor system in response to external amino acid levels.</text>
</comment>
<comment type="PTM">
    <text evidence="1">Palmitoylated by PFA4.</text>
</comment>
<comment type="similarity">
    <text evidence="5">Belongs to the amino acid-polyamine-organocation (APC) superfamily. YAT (TC 2.A.3.10) family.</text>
</comment>
<evidence type="ECO:0000250" key="1"/>
<evidence type="ECO:0000250" key="2">
    <source>
        <dbReference type="UniProtKB" id="P48813"/>
    </source>
</evidence>
<evidence type="ECO:0000255" key="3"/>
<evidence type="ECO:0000256" key="4">
    <source>
        <dbReference type="SAM" id="MobiDB-lite"/>
    </source>
</evidence>
<evidence type="ECO:0000305" key="5"/>
<protein>
    <recommendedName>
        <fullName>General amino acid permease AGP1</fullName>
    </recommendedName>
    <alternativeName>
        <fullName>Asparagine/glutamine permease</fullName>
    </alternativeName>
</protein>
<feature type="chain" id="PRO_0000330042" description="General amino acid permease AGP1">
    <location>
        <begin position="1"/>
        <end position="633"/>
    </location>
</feature>
<feature type="topological domain" description="Cytoplasmic" evidence="3">
    <location>
        <begin position="1"/>
        <end position="124"/>
    </location>
</feature>
<feature type="transmembrane region" description="Helical" evidence="3">
    <location>
        <begin position="125"/>
        <end position="145"/>
    </location>
</feature>
<feature type="topological domain" description="Extracellular" evidence="3">
    <location>
        <begin position="146"/>
        <end position="148"/>
    </location>
</feature>
<feature type="transmembrane region" description="Helical" evidence="3">
    <location>
        <begin position="149"/>
        <end position="169"/>
    </location>
</feature>
<feature type="topological domain" description="Cytoplasmic" evidence="3">
    <location>
        <begin position="170"/>
        <end position="197"/>
    </location>
</feature>
<feature type="transmembrane region" description="Helical" evidence="3">
    <location>
        <begin position="198"/>
        <end position="218"/>
    </location>
</feature>
<feature type="topological domain" description="Extracellular" evidence="3">
    <location>
        <begin position="219"/>
        <end position="231"/>
    </location>
</feature>
<feature type="transmembrane region" description="Helical" evidence="3">
    <location>
        <begin position="232"/>
        <end position="252"/>
    </location>
</feature>
<feature type="topological domain" description="Cytoplasmic" evidence="3">
    <location>
        <begin position="253"/>
        <end position="260"/>
    </location>
</feature>
<feature type="transmembrane region" description="Helical" evidence="3">
    <location>
        <begin position="261"/>
        <end position="281"/>
    </location>
</feature>
<feature type="topological domain" description="Extracellular" evidence="3">
    <location>
        <begin position="282"/>
        <end position="313"/>
    </location>
</feature>
<feature type="transmembrane region" description="Helical" evidence="3">
    <location>
        <begin position="314"/>
        <end position="334"/>
    </location>
</feature>
<feature type="topological domain" description="Cytoplasmic" evidence="3">
    <location>
        <begin position="335"/>
        <end position="352"/>
    </location>
</feature>
<feature type="transmembrane region" description="Helical" evidence="3">
    <location>
        <begin position="353"/>
        <end position="373"/>
    </location>
</feature>
<feature type="topological domain" description="Extracellular" evidence="3">
    <location>
        <begin position="374"/>
        <end position="392"/>
    </location>
</feature>
<feature type="transmembrane region" description="Helical" evidence="3">
    <location>
        <begin position="393"/>
        <end position="413"/>
    </location>
</feature>
<feature type="topological domain" description="Cytoplasmic" evidence="3">
    <location>
        <begin position="414"/>
        <end position="452"/>
    </location>
</feature>
<feature type="transmembrane region" description="Helical" evidence="3">
    <location>
        <begin position="453"/>
        <end position="473"/>
    </location>
</feature>
<feature type="topological domain" description="Extracellular" evidence="3">
    <location>
        <begin position="474"/>
        <end position="477"/>
    </location>
</feature>
<feature type="transmembrane region" description="Helical" evidence="3">
    <location>
        <begin position="478"/>
        <end position="498"/>
    </location>
</feature>
<feature type="topological domain" description="Cytoplasmic" evidence="3">
    <location>
        <begin position="499"/>
        <end position="531"/>
    </location>
</feature>
<feature type="transmembrane region" description="Helical" evidence="3">
    <location>
        <begin position="532"/>
        <end position="552"/>
    </location>
</feature>
<feature type="topological domain" description="Extracellular" evidence="3">
    <location>
        <begin position="553"/>
        <end position="557"/>
    </location>
</feature>
<feature type="transmembrane region" description="Helical" evidence="3">
    <location>
        <begin position="558"/>
        <end position="578"/>
    </location>
</feature>
<feature type="topological domain" description="Cytoplasmic" evidence="3">
    <location>
        <begin position="579"/>
        <end position="633"/>
    </location>
</feature>
<feature type="region of interest" description="Disordered" evidence="4">
    <location>
        <begin position="1"/>
        <end position="54"/>
    </location>
</feature>
<feature type="region of interest" description="Disordered" evidence="4">
    <location>
        <begin position="87"/>
        <end position="116"/>
    </location>
</feature>
<feature type="compositionally biased region" description="Polar residues" evidence="4">
    <location>
        <begin position="34"/>
        <end position="54"/>
    </location>
</feature>
<feature type="compositionally biased region" description="Basic and acidic residues" evidence="4">
    <location>
        <begin position="92"/>
        <end position="101"/>
    </location>
</feature>
<feature type="modified residue" description="Phosphoserine" evidence="2">
    <location>
        <position position="6"/>
    </location>
</feature>
<feature type="lipid moiety-binding region" description="S-palmitoyl cysteine" evidence="1">
    <location>
        <position position="633"/>
    </location>
</feature>
<feature type="cross-link" description="Glycyl lysine isopeptide (Lys-Gly) (interchain with G-Cter in ubiquitin)" evidence="2">
    <location>
        <position position="11"/>
    </location>
</feature>
<proteinExistence type="inferred from homology"/>
<dbReference type="EMBL" id="AAFW02000089">
    <property type="protein sequence ID" value="EDN62104.1"/>
    <property type="molecule type" value="Genomic_DNA"/>
</dbReference>
<dbReference type="SMR" id="A6ZTG5"/>
<dbReference type="HOGENOM" id="CLU_007946_12_0_1"/>
<dbReference type="Proteomes" id="UP000007060">
    <property type="component" value="Unassembled WGS sequence"/>
</dbReference>
<dbReference type="GO" id="GO:0005886">
    <property type="term" value="C:plasma membrane"/>
    <property type="evidence" value="ECO:0007669"/>
    <property type="project" value="UniProtKB-SubCell"/>
</dbReference>
<dbReference type="GO" id="GO:0015171">
    <property type="term" value="F:amino acid transmembrane transporter activity"/>
    <property type="evidence" value="ECO:0007669"/>
    <property type="project" value="TreeGrafter"/>
</dbReference>
<dbReference type="FunFam" id="1.20.1740.10:FF:000017">
    <property type="entry name" value="Amino acid permease"/>
    <property type="match status" value="1"/>
</dbReference>
<dbReference type="Gene3D" id="1.20.1740.10">
    <property type="entry name" value="Amino acid/polyamine transporter I"/>
    <property type="match status" value="1"/>
</dbReference>
<dbReference type="InterPro" id="IPR004841">
    <property type="entry name" value="AA-permease/SLC12A_dom"/>
</dbReference>
<dbReference type="InterPro" id="IPR004840">
    <property type="entry name" value="Amino_acid_permease_CS"/>
</dbReference>
<dbReference type="InterPro" id="IPR004762">
    <property type="entry name" value="Amino_acid_permease_fungi"/>
</dbReference>
<dbReference type="InterPro" id="IPR050524">
    <property type="entry name" value="APC_YAT"/>
</dbReference>
<dbReference type="NCBIfam" id="TIGR00913">
    <property type="entry name" value="2A0310"/>
    <property type="match status" value="1"/>
</dbReference>
<dbReference type="PANTHER" id="PTHR43341">
    <property type="entry name" value="AMINO ACID PERMEASE"/>
    <property type="match status" value="1"/>
</dbReference>
<dbReference type="PANTHER" id="PTHR43341:SF17">
    <property type="entry name" value="GENERAL AMINO ACID PERMEASE AGP1-RELATED"/>
    <property type="match status" value="1"/>
</dbReference>
<dbReference type="Pfam" id="PF00324">
    <property type="entry name" value="AA_permease"/>
    <property type="match status" value="1"/>
</dbReference>
<dbReference type="PROSITE" id="PS00218">
    <property type="entry name" value="AMINO_ACID_PERMEASE_1"/>
    <property type="match status" value="1"/>
</dbReference>